<accession>Q70EL4</accession>
<accession>A6NDT9</accession>
<accession>B7ZLT9</accession>
<accession>B7ZVX5</accession>
<accession>Q8N2C5</accession>
<accession>Q96DQ6</accession>
<sequence length="1123" mass="122809">MDLGPGDAAGGGPLAPRPRRRRSLRRLFSRFLLALGSRSRPGDSPPRPQPGHCDGDGEGGFACAPGPVPAAPGSPGEERPPGPQPQLQLPAGDGARPPGAQGLKNHGNTCFMNAVVQCLSNTDLLAEFLALGRYRAAPGRAEVTEQLAALVRALWTREYTPQLSAEFKNAVSKYGSQFQGNSQHDALEFLLWLLDRVHEDLEGSSRGPVSEKLPPEATKTSENCLSPSAQLPLGQSFVQSHFQAQYRSSLTCPHCLKQSNTFDPFLCVSLPIPLRQTRFLSVTLVFPSKSQRFLRVGLAVPILSTVAALRKMVAEEGGVPADEVILVELYPSGFQRSFFDEEDLNTIAEGDNVYAFQVPPSPSQGTLSAHPLGLSASPRLAAREGQRFSLSLHSESKVLILFCNLVGSGQQASRFGPPFLIREDRAVSWAQLQQSILSKVRHLMKSEAPVQNLGSLFSIRVVGLSVACSYLSPKDSRPLCHWAVDRVLHLRRPGGPPHVKLAVEWDSSVKERLFGSLQEERAQDADSVWQQQQAHQQHSCTLDECFQFYTKEEQLAQDDAWKCPHCQVLQQGMVKLSLWTLPDILIIHLKRFCQVGERRNKLSTLVKFPLSGLNMAPHVAQRSTSPEAGLGPWPSWKQPDCLPTSYPLDFLYDLYAVCNHHGNLQGGHYTAYCRNSLDGQWYSYDDSTVEPLREDEVNTRGAYILFYQKRNSIPPWSASSSMRGSTSSSLSDHWLLRLGSHAGSTRGSLLSWSSAPCPSLPQVPDSPIFTNSLCNQEKGGLEPRRLVRGVKGRSISMKAPTTSRAKQGPFKTMPLRWSFGSKEKPPGASVELVEYLESRRRPRSTSQSIVSLLTGTAGEDEKSASPRSNVALPANSEDGGRAIERGPAGVPCPSAQPNHCLAPGNSDGPNTARKLKENAGQDIKLPRKFDLPLTVMPSVEHEKPARPEGQKAMNWKESFQMGSKSSPPSPYMGFSGNSKDSRRGTSELDRPLQGTLTLLRSVFRKKENRRNERAEVSPQVPPVSLVSGGLSPAMDGQAPGSPPALRIPEGLARGLGSRLERDVWSAPSSLRLPRKASRAPRGSALGMSQRTVPGEQASYGTFQRVKYHTLSLGRKKTLPESSF</sequence>
<organism>
    <name type="scientific">Homo sapiens</name>
    <name type="common">Human</name>
    <dbReference type="NCBI Taxonomy" id="9606"/>
    <lineage>
        <taxon>Eukaryota</taxon>
        <taxon>Metazoa</taxon>
        <taxon>Chordata</taxon>
        <taxon>Craniata</taxon>
        <taxon>Vertebrata</taxon>
        <taxon>Euteleostomi</taxon>
        <taxon>Mammalia</taxon>
        <taxon>Eutheria</taxon>
        <taxon>Euarchontoglires</taxon>
        <taxon>Primates</taxon>
        <taxon>Haplorrhini</taxon>
        <taxon>Catarrhini</taxon>
        <taxon>Hominidae</taxon>
        <taxon>Homo</taxon>
    </lineage>
</organism>
<proteinExistence type="evidence at protein level"/>
<evidence type="ECO:0000250" key="1"/>
<evidence type="ECO:0000250" key="2">
    <source>
        <dbReference type="UniProtKB" id="Q8BUM9"/>
    </source>
</evidence>
<evidence type="ECO:0000255" key="3">
    <source>
        <dbReference type="PROSITE-ProRule" id="PRU10092"/>
    </source>
</evidence>
<evidence type="ECO:0000255" key="4">
    <source>
        <dbReference type="PROSITE-ProRule" id="PRU10093"/>
    </source>
</evidence>
<evidence type="ECO:0000256" key="5">
    <source>
        <dbReference type="SAM" id="MobiDB-lite"/>
    </source>
</evidence>
<evidence type="ECO:0000269" key="6">
    <source>
    </source>
</evidence>
<evidence type="ECO:0000303" key="7">
    <source>
    </source>
</evidence>
<evidence type="ECO:0000303" key="8">
    <source>
    </source>
</evidence>
<evidence type="ECO:0000305" key="9"/>
<evidence type="ECO:0007744" key="10">
    <source>
    </source>
</evidence>
<feature type="chain" id="PRO_0000249521" description="Ubiquitin carboxyl-terminal hydrolase 43">
    <location>
        <begin position="1"/>
        <end position="1123"/>
    </location>
</feature>
<feature type="domain" description="USP">
    <location>
        <begin position="101"/>
        <end position="710"/>
    </location>
</feature>
<feature type="region of interest" description="Disordered" evidence="5">
    <location>
        <begin position="1"/>
        <end position="102"/>
    </location>
</feature>
<feature type="region of interest" description="Disordered" evidence="5">
    <location>
        <begin position="202"/>
        <end position="221"/>
    </location>
</feature>
<feature type="region of interest" description="Disordered" evidence="5">
    <location>
        <begin position="795"/>
        <end position="826"/>
    </location>
</feature>
<feature type="region of interest" description="Disordered" evidence="5">
    <location>
        <begin position="854"/>
        <end position="886"/>
    </location>
</feature>
<feature type="region of interest" description="Disordered" evidence="5">
    <location>
        <begin position="959"/>
        <end position="1049"/>
    </location>
</feature>
<feature type="region of interest" description="Disordered" evidence="5">
    <location>
        <begin position="1068"/>
        <end position="1099"/>
    </location>
</feature>
<feature type="compositionally biased region" description="Basic residues" evidence="5">
    <location>
        <begin position="17"/>
        <end position="28"/>
    </location>
</feature>
<feature type="compositionally biased region" description="Low complexity" evidence="5">
    <location>
        <begin position="29"/>
        <end position="39"/>
    </location>
</feature>
<feature type="compositionally biased region" description="Basic and acidic residues" evidence="5">
    <location>
        <begin position="979"/>
        <end position="990"/>
    </location>
</feature>
<feature type="compositionally biased region" description="Low complexity" evidence="5">
    <location>
        <begin position="1016"/>
        <end position="1027"/>
    </location>
</feature>
<feature type="active site" description="Nucleophile" evidence="3 4">
    <location>
        <position position="110"/>
    </location>
</feature>
<feature type="active site" description="Proton acceptor" evidence="3 4">
    <location>
        <position position="668"/>
    </location>
</feature>
<feature type="modified residue" description="Asymmetric dimethylarginine" evidence="2">
    <location>
        <position position="746"/>
    </location>
</feature>
<feature type="modified residue" description="Phosphoserine" evidence="2">
    <location>
        <position position="969"/>
    </location>
</feature>
<feature type="modified residue" description="Phosphoserine" evidence="10">
    <location>
        <position position="1041"/>
    </location>
</feature>
<feature type="splice variant" id="VSP_020466" description="In isoform 2." evidence="7">
    <location>
        <begin position="1"/>
        <end position="488"/>
    </location>
</feature>
<feature type="splice variant" id="VSP_020467" description="In isoform 3." evidence="7">
    <location>
        <begin position="1"/>
        <end position="311"/>
    </location>
</feature>
<feature type="splice variant" id="VSP_020468" description="In isoform 2." evidence="7">
    <original>HLRRPGGPPHVKLAVEWDSSVKERLFGSLQEERAQDADSVWQQQQAHQQHSCTLDECFQFYTKEE</original>
    <variation>MPTVCGSSSRRISSTAVPWMNVFSSTPRRSRSRPGGPCPGREGGWLPLVGWPRAAGASQSGWFAF</variation>
    <location>
        <begin position="489"/>
        <end position="553"/>
    </location>
</feature>
<feature type="splice variant" id="VSP_046779" description="In isoform 4." evidence="8">
    <location>
        <begin position="666"/>
        <end position="670"/>
    </location>
</feature>
<feature type="sequence conflict" description="In Ref. 1; CAE47744." evidence="9" ref="1">
    <original>K</original>
    <variation>FQ</variation>
    <location>
        <position position="168"/>
    </location>
</feature>
<feature type="sequence conflict" description="In Ref. 1; CAE47744." evidence="9" ref="1">
    <original>K</original>
    <variation>Q</variation>
    <location>
        <position position="212"/>
    </location>
</feature>
<feature type="sequence conflict" description="In Ref. 2; BAB70869." evidence="9" ref="2">
    <original>G</original>
    <variation>E</variation>
    <location>
        <position position="976"/>
    </location>
</feature>
<name>UBP43_HUMAN</name>
<keyword id="KW-0025">Alternative splicing</keyword>
<keyword id="KW-0378">Hydrolase</keyword>
<keyword id="KW-0488">Methylation</keyword>
<keyword id="KW-0597">Phosphoprotein</keyword>
<keyword id="KW-0645">Protease</keyword>
<keyword id="KW-1267">Proteomics identification</keyword>
<keyword id="KW-1185">Reference proteome</keyword>
<keyword id="KW-0788">Thiol protease</keyword>
<keyword id="KW-0833">Ubl conjugation pathway</keyword>
<comment type="function">
    <text evidence="1">May recognize and hydrolyze the peptide bond at the C-terminal Gly of ubiquitin. Involved in the processing of poly-ubiquitin precursors as well as that of ubiquitinated proteins (By similarity).</text>
</comment>
<comment type="catalytic activity">
    <reaction>
        <text>Thiol-dependent hydrolysis of ester, thioester, amide, peptide and isopeptide bonds formed by the C-terminal Gly of ubiquitin (a 76-residue protein attached to proteins as an intracellular targeting signal).</text>
        <dbReference type="EC" id="3.4.19.12"/>
    </reaction>
</comment>
<comment type="alternative products">
    <event type="alternative splicing"/>
    <isoform>
        <id>Q70EL4-1</id>
        <name>1</name>
        <sequence type="displayed"/>
    </isoform>
    <isoform>
        <id>Q70EL4-2</id>
        <name>2</name>
        <sequence type="described" ref="VSP_020466 VSP_020468"/>
    </isoform>
    <isoform>
        <id>Q70EL4-3</id>
        <name>3</name>
        <sequence type="described" ref="VSP_020467"/>
    </isoform>
    <isoform>
        <id>Q70EL4-4</id>
        <name>4</name>
        <sequence type="described" ref="VSP_046779"/>
    </isoform>
</comment>
<comment type="tissue specificity">
    <text evidence="6">Expressed in brain, aorta and lung at low levels.</text>
</comment>
<comment type="similarity">
    <text evidence="9">Belongs to the peptidase C19 family.</text>
</comment>
<comment type="sequence caution" evidence="9">
    <conflict type="frameshift">
        <sequence resource="EMBL-CDS" id="BAB70869"/>
    </conflict>
</comment>
<protein>
    <recommendedName>
        <fullName>Ubiquitin carboxyl-terminal hydrolase 43</fullName>
        <ecNumber>3.4.19.12</ecNumber>
    </recommendedName>
    <alternativeName>
        <fullName>Deubiquitinating enzyme 43</fullName>
    </alternativeName>
    <alternativeName>
        <fullName>Ubiquitin thioesterase 43</fullName>
    </alternativeName>
    <alternativeName>
        <fullName>Ubiquitin-specific-processing protease 43</fullName>
    </alternativeName>
</protein>
<dbReference type="EC" id="3.4.19.12"/>
<dbReference type="EMBL" id="AJ583817">
    <property type="protein sequence ID" value="CAE47744.2"/>
    <property type="molecule type" value="mRNA"/>
</dbReference>
<dbReference type="EMBL" id="AK055188">
    <property type="protein sequence ID" value="BAB70869.1"/>
    <property type="status" value="ALT_FRAME"/>
    <property type="molecule type" value="mRNA"/>
</dbReference>
<dbReference type="EMBL" id="AK090821">
    <property type="status" value="NOT_ANNOTATED_CDS"/>
    <property type="molecule type" value="mRNA"/>
</dbReference>
<dbReference type="EMBL" id="AC027045">
    <property type="status" value="NOT_ANNOTATED_CDS"/>
    <property type="molecule type" value="Genomic_DNA"/>
</dbReference>
<dbReference type="EMBL" id="AC118755">
    <property type="status" value="NOT_ANNOTATED_CDS"/>
    <property type="molecule type" value="Genomic_DNA"/>
</dbReference>
<dbReference type="EMBL" id="CH471108">
    <property type="protein sequence ID" value="EAW90022.1"/>
    <property type="molecule type" value="Genomic_DNA"/>
</dbReference>
<dbReference type="EMBL" id="BC136368">
    <property type="protein sequence ID" value="AAI36369.1"/>
    <property type="molecule type" value="mRNA"/>
</dbReference>
<dbReference type="EMBL" id="BC144041">
    <property type="protein sequence ID" value="AAI44042.1"/>
    <property type="molecule type" value="mRNA"/>
</dbReference>
<dbReference type="EMBL" id="BC171759">
    <property type="protein sequence ID" value="AAI71759.1"/>
    <property type="molecule type" value="mRNA"/>
</dbReference>
<dbReference type="CCDS" id="CCDS45610.1">
    <molecule id="Q70EL4-1"/>
</dbReference>
<dbReference type="CCDS" id="CCDS58516.1">
    <molecule id="Q70EL4-4"/>
</dbReference>
<dbReference type="RefSeq" id="NP_001254505.1">
    <molecule id="Q70EL4-4"/>
    <property type="nucleotide sequence ID" value="NM_001267576.2"/>
</dbReference>
<dbReference type="RefSeq" id="NP_694942.3">
    <molecule id="Q70EL4-1"/>
    <property type="nucleotide sequence ID" value="NM_153210.4"/>
</dbReference>
<dbReference type="RefSeq" id="XP_011521944.1">
    <property type="nucleotide sequence ID" value="XM_011523642.2"/>
</dbReference>
<dbReference type="RefSeq" id="XP_016879649.1">
    <molecule id="Q70EL4-3"/>
    <property type="nucleotide sequence ID" value="XM_017024160.2"/>
</dbReference>
<dbReference type="RefSeq" id="XP_016879650.1">
    <molecule id="Q70EL4-3"/>
    <property type="nucleotide sequence ID" value="XM_017024161.1"/>
</dbReference>
<dbReference type="RefSeq" id="XP_054170982.1">
    <molecule id="Q70EL4-3"/>
    <property type="nucleotide sequence ID" value="XM_054315007.1"/>
</dbReference>
<dbReference type="RefSeq" id="XP_054170983.1">
    <molecule id="Q70EL4-3"/>
    <property type="nucleotide sequence ID" value="XM_054315008.1"/>
</dbReference>
<dbReference type="SMR" id="Q70EL4"/>
<dbReference type="BioGRID" id="125884">
    <property type="interactions" value="57"/>
</dbReference>
<dbReference type="FunCoup" id="Q70EL4">
    <property type="interactions" value="858"/>
</dbReference>
<dbReference type="IntAct" id="Q70EL4">
    <property type="interactions" value="36"/>
</dbReference>
<dbReference type="MINT" id="Q70EL4"/>
<dbReference type="STRING" id="9606.ENSP00000285199"/>
<dbReference type="MEROPS" id="C19.976"/>
<dbReference type="GlyGen" id="Q70EL4">
    <property type="glycosylation" value="2 sites, 1 O-linked glycan (2 sites)"/>
</dbReference>
<dbReference type="iPTMnet" id="Q70EL4"/>
<dbReference type="PhosphoSitePlus" id="Q70EL4"/>
<dbReference type="BioMuta" id="USP43"/>
<dbReference type="DMDM" id="296452852"/>
<dbReference type="jPOST" id="Q70EL4"/>
<dbReference type="MassIVE" id="Q70EL4"/>
<dbReference type="PaxDb" id="9606-ENSP00000285199"/>
<dbReference type="PeptideAtlas" id="Q70EL4"/>
<dbReference type="ProteomicsDB" id="68549">
    <molecule id="Q70EL4-1"/>
</dbReference>
<dbReference type="ProteomicsDB" id="68550">
    <molecule id="Q70EL4-2"/>
</dbReference>
<dbReference type="ProteomicsDB" id="68551">
    <molecule id="Q70EL4-3"/>
</dbReference>
<dbReference type="ProteomicsDB" id="7268"/>
<dbReference type="Antibodypedia" id="6274">
    <property type="antibodies" value="149 antibodies from 24 providers"/>
</dbReference>
<dbReference type="DNASU" id="124739"/>
<dbReference type="Ensembl" id="ENST00000285199.12">
    <molecule id="Q70EL4-1"/>
    <property type="protein sequence ID" value="ENSP00000285199.6"/>
    <property type="gene ID" value="ENSG00000154914.17"/>
</dbReference>
<dbReference type="Ensembl" id="ENST00000570475.5">
    <molecule id="Q70EL4-4"/>
    <property type="protein sequence ID" value="ENSP00000458963.1"/>
    <property type="gene ID" value="ENSG00000154914.17"/>
</dbReference>
<dbReference type="GeneID" id="124739"/>
<dbReference type="KEGG" id="hsa:124739"/>
<dbReference type="MANE-Select" id="ENST00000285199.12">
    <property type="protein sequence ID" value="ENSP00000285199.6"/>
    <property type="RefSeq nucleotide sequence ID" value="NM_153210.5"/>
    <property type="RefSeq protein sequence ID" value="NP_694942.3"/>
</dbReference>
<dbReference type="UCSC" id="uc010cod.5">
    <molecule id="Q70EL4-1"/>
    <property type="organism name" value="human"/>
</dbReference>
<dbReference type="AGR" id="HGNC:20072"/>
<dbReference type="CTD" id="124739"/>
<dbReference type="DisGeNET" id="124739"/>
<dbReference type="GeneCards" id="USP43"/>
<dbReference type="HGNC" id="HGNC:20072">
    <property type="gene designation" value="USP43"/>
</dbReference>
<dbReference type="HPA" id="ENSG00000154914">
    <property type="expression patterns" value="Low tissue specificity"/>
</dbReference>
<dbReference type="neXtProt" id="NX_Q70EL4"/>
<dbReference type="OpenTargets" id="ENSG00000154914"/>
<dbReference type="PharmGKB" id="PA134865304"/>
<dbReference type="VEuPathDB" id="HostDB:ENSG00000154914"/>
<dbReference type="eggNOG" id="KOG1868">
    <property type="taxonomic scope" value="Eukaryota"/>
</dbReference>
<dbReference type="eggNOG" id="KOG1870">
    <property type="taxonomic scope" value="Eukaryota"/>
</dbReference>
<dbReference type="GeneTree" id="ENSGT00940000158772"/>
<dbReference type="HOGENOM" id="CLU_001060_6_0_1"/>
<dbReference type="InParanoid" id="Q70EL4"/>
<dbReference type="OMA" id="WKQPGCL"/>
<dbReference type="OrthoDB" id="292964at2759"/>
<dbReference type="PAN-GO" id="Q70EL4">
    <property type="GO annotations" value="0 GO annotations based on evolutionary models"/>
</dbReference>
<dbReference type="PhylomeDB" id="Q70EL4"/>
<dbReference type="TreeFam" id="TF106278"/>
<dbReference type="PathwayCommons" id="Q70EL4"/>
<dbReference type="Reactome" id="R-HSA-5656169">
    <property type="pathway name" value="Termination of translesion DNA synthesis"/>
</dbReference>
<dbReference type="SignaLink" id="Q70EL4"/>
<dbReference type="BioGRID-ORCS" id="124739">
    <property type="hits" value="18 hits in 1196 CRISPR screens"/>
</dbReference>
<dbReference type="ChiTaRS" id="USP43">
    <property type="organism name" value="human"/>
</dbReference>
<dbReference type="GenomeRNAi" id="124739"/>
<dbReference type="Pharos" id="Q70EL4">
    <property type="development level" value="Tbio"/>
</dbReference>
<dbReference type="PRO" id="PR:Q70EL4"/>
<dbReference type="Proteomes" id="UP000005640">
    <property type="component" value="Chromosome 17"/>
</dbReference>
<dbReference type="RNAct" id="Q70EL4">
    <property type="molecule type" value="protein"/>
</dbReference>
<dbReference type="Bgee" id="ENSG00000154914">
    <property type="expression patterns" value="Expressed in oviduct epithelium and 158 other cell types or tissues"/>
</dbReference>
<dbReference type="ExpressionAtlas" id="Q70EL4">
    <property type="expression patterns" value="baseline and differential"/>
</dbReference>
<dbReference type="GO" id="GO:0005654">
    <property type="term" value="C:nucleoplasm"/>
    <property type="evidence" value="ECO:0000304"/>
    <property type="project" value="Reactome"/>
</dbReference>
<dbReference type="GO" id="GO:0004843">
    <property type="term" value="F:cysteine-type deubiquitinase activity"/>
    <property type="evidence" value="ECO:0007669"/>
    <property type="project" value="UniProtKB-EC"/>
</dbReference>
<dbReference type="GO" id="GO:0019785">
    <property type="term" value="F:ISG15-specific peptidase activity"/>
    <property type="evidence" value="ECO:0000304"/>
    <property type="project" value="Reactome"/>
</dbReference>
<dbReference type="GO" id="GO:0016579">
    <property type="term" value="P:protein deubiquitination"/>
    <property type="evidence" value="ECO:0007669"/>
    <property type="project" value="InterPro"/>
</dbReference>
<dbReference type="GO" id="GO:0006508">
    <property type="term" value="P:proteolysis"/>
    <property type="evidence" value="ECO:0007669"/>
    <property type="project" value="UniProtKB-KW"/>
</dbReference>
<dbReference type="GO" id="GO:0019985">
    <property type="term" value="P:translesion synthesis"/>
    <property type="evidence" value="ECO:0000304"/>
    <property type="project" value="Reactome"/>
</dbReference>
<dbReference type="CDD" id="cd02674">
    <property type="entry name" value="Peptidase_C19R"/>
    <property type="match status" value="1"/>
</dbReference>
<dbReference type="FunFam" id="3.90.70.10:FF:000048">
    <property type="entry name" value="Ubiquitin carboxyl-terminal hydrolase 31"/>
    <property type="match status" value="1"/>
</dbReference>
<dbReference type="FunFam" id="3.90.70.10:FF:000046">
    <property type="entry name" value="ubiquitin carboxyl-terminal hydrolase 31"/>
    <property type="match status" value="1"/>
</dbReference>
<dbReference type="Gene3D" id="3.90.70.10">
    <property type="entry name" value="Cysteine proteinases"/>
    <property type="match status" value="2"/>
</dbReference>
<dbReference type="InterPro" id="IPR038765">
    <property type="entry name" value="Papain-like_cys_pep_sf"/>
</dbReference>
<dbReference type="InterPro" id="IPR001394">
    <property type="entry name" value="Peptidase_C19_UCH"/>
</dbReference>
<dbReference type="InterPro" id="IPR050185">
    <property type="entry name" value="Ub_carboxyl-term_hydrolase"/>
</dbReference>
<dbReference type="InterPro" id="IPR018200">
    <property type="entry name" value="USP_CS"/>
</dbReference>
<dbReference type="InterPro" id="IPR028889">
    <property type="entry name" value="USP_dom"/>
</dbReference>
<dbReference type="PANTHER" id="PTHR21646">
    <property type="entry name" value="UBIQUITIN CARBOXYL-TERMINAL HYDROLASE"/>
    <property type="match status" value="1"/>
</dbReference>
<dbReference type="PANTHER" id="PTHR21646:SF20">
    <property type="entry name" value="UBIQUITIN CARBOXYL-TERMINAL HYDROLASE 43"/>
    <property type="match status" value="1"/>
</dbReference>
<dbReference type="Pfam" id="PF00443">
    <property type="entry name" value="UCH"/>
    <property type="match status" value="1"/>
</dbReference>
<dbReference type="SUPFAM" id="SSF54001">
    <property type="entry name" value="Cysteine proteinases"/>
    <property type="match status" value="1"/>
</dbReference>
<dbReference type="PROSITE" id="PS00972">
    <property type="entry name" value="USP_1"/>
    <property type="match status" value="1"/>
</dbReference>
<dbReference type="PROSITE" id="PS00973">
    <property type="entry name" value="USP_2"/>
    <property type="match status" value="1"/>
</dbReference>
<dbReference type="PROSITE" id="PS50235">
    <property type="entry name" value="USP_3"/>
    <property type="match status" value="1"/>
</dbReference>
<reference key="1">
    <citation type="journal article" date="2004" name="Biochem. Biophys. Res. Commun.">
        <title>Cloning and enzymatic analysis of 22 novel human ubiquitin-specific proteases.</title>
        <authorList>
            <person name="Quesada V."/>
            <person name="Diaz-Perales A."/>
            <person name="Gutierrez-Fernandez A."/>
            <person name="Garabaya C."/>
            <person name="Cal S."/>
            <person name="Lopez-Otin C."/>
        </authorList>
    </citation>
    <scope>NUCLEOTIDE SEQUENCE [MRNA] (ISOFORM 1)</scope>
    <scope>TISSUE SPECIFICITY</scope>
</reference>
<reference key="2">
    <citation type="journal article" date="2004" name="Nat. Genet.">
        <title>Complete sequencing and characterization of 21,243 full-length human cDNAs.</title>
        <authorList>
            <person name="Ota T."/>
            <person name="Suzuki Y."/>
            <person name="Nishikawa T."/>
            <person name="Otsuki T."/>
            <person name="Sugiyama T."/>
            <person name="Irie R."/>
            <person name="Wakamatsu A."/>
            <person name="Hayashi K."/>
            <person name="Sato H."/>
            <person name="Nagai K."/>
            <person name="Kimura K."/>
            <person name="Makita H."/>
            <person name="Sekine M."/>
            <person name="Obayashi M."/>
            <person name="Nishi T."/>
            <person name="Shibahara T."/>
            <person name="Tanaka T."/>
            <person name="Ishii S."/>
            <person name="Yamamoto J."/>
            <person name="Saito K."/>
            <person name="Kawai Y."/>
            <person name="Isono Y."/>
            <person name="Nakamura Y."/>
            <person name="Nagahari K."/>
            <person name="Murakami K."/>
            <person name="Yasuda T."/>
            <person name="Iwayanagi T."/>
            <person name="Wagatsuma M."/>
            <person name="Shiratori A."/>
            <person name="Sudo H."/>
            <person name="Hosoiri T."/>
            <person name="Kaku Y."/>
            <person name="Kodaira H."/>
            <person name="Kondo H."/>
            <person name="Sugawara M."/>
            <person name="Takahashi M."/>
            <person name="Kanda K."/>
            <person name="Yokoi T."/>
            <person name="Furuya T."/>
            <person name="Kikkawa E."/>
            <person name="Omura Y."/>
            <person name="Abe K."/>
            <person name="Kamihara K."/>
            <person name="Katsuta N."/>
            <person name="Sato K."/>
            <person name="Tanikawa M."/>
            <person name="Yamazaki M."/>
            <person name="Ninomiya K."/>
            <person name="Ishibashi T."/>
            <person name="Yamashita H."/>
            <person name="Murakawa K."/>
            <person name="Fujimori K."/>
            <person name="Tanai H."/>
            <person name="Kimata M."/>
            <person name="Watanabe M."/>
            <person name="Hiraoka S."/>
            <person name="Chiba Y."/>
            <person name="Ishida S."/>
            <person name="Ono Y."/>
            <person name="Takiguchi S."/>
            <person name="Watanabe S."/>
            <person name="Yosida M."/>
            <person name="Hotuta T."/>
            <person name="Kusano J."/>
            <person name="Kanehori K."/>
            <person name="Takahashi-Fujii A."/>
            <person name="Hara H."/>
            <person name="Tanase T.-O."/>
            <person name="Nomura Y."/>
            <person name="Togiya S."/>
            <person name="Komai F."/>
            <person name="Hara R."/>
            <person name="Takeuchi K."/>
            <person name="Arita M."/>
            <person name="Imose N."/>
            <person name="Musashino K."/>
            <person name="Yuuki H."/>
            <person name="Oshima A."/>
            <person name="Sasaki N."/>
            <person name="Aotsuka S."/>
            <person name="Yoshikawa Y."/>
            <person name="Matsunawa H."/>
            <person name="Ichihara T."/>
            <person name="Shiohata N."/>
            <person name="Sano S."/>
            <person name="Moriya S."/>
            <person name="Momiyama H."/>
            <person name="Satoh N."/>
            <person name="Takami S."/>
            <person name="Terashima Y."/>
            <person name="Suzuki O."/>
            <person name="Nakagawa S."/>
            <person name="Senoh A."/>
            <person name="Mizoguchi H."/>
            <person name="Goto Y."/>
            <person name="Shimizu F."/>
            <person name="Wakebe H."/>
            <person name="Hishigaki H."/>
            <person name="Watanabe T."/>
            <person name="Sugiyama A."/>
            <person name="Takemoto M."/>
            <person name="Kawakami B."/>
            <person name="Yamazaki M."/>
            <person name="Watanabe K."/>
            <person name="Kumagai A."/>
            <person name="Itakura S."/>
            <person name="Fukuzumi Y."/>
            <person name="Fujimori Y."/>
            <person name="Komiyama M."/>
            <person name="Tashiro H."/>
            <person name="Tanigami A."/>
            <person name="Fujiwara T."/>
            <person name="Ono T."/>
            <person name="Yamada K."/>
            <person name="Fujii Y."/>
            <person name="Ozaki K."/>
            <person name="Hirao M."/>
            <person name="Ohmori Y."/>
            <person name="Kawabata A."/>
            <person name="Hikiji T."/>
            <person name="Kobatake N."/>
            <person name="Inagaki H."/>
            <person name="Ikema Y."/>
            <person name="Okamoto S."/>
            <person name="Okitani R."/>
            <person name="Kawakami T."/>
            <person name="Noguchi S."/>
            <person name="Itoh T."/>
            <person name="Shigeta K."/>
            <person name="Senba T."/>
            <person name="Matsumura K."/>
            <person name="Nakajima Y."/>
            <person name="Mizuno T."/>
            <person name="Morinaga M."/>
            <person name="Sasaki M."/>
            <person name="Togashi T."/>
            <person name="Oyama M."/>
            <person name="Hata H."/>
            <person name="Watanabe M."/>
            <person name="Komatsu T."/>
            <person name="Mizushima-Sugano J."/>
            <person name="Satoh T."/>
            <person name="Shirai Y."/>
            <person name="Takahashi Y."/>
            <person name="Nakagawa K."/>
            <person name="Okumura K."/>
            <person name="Nagase T."/>
            <person name="Nomura N."/>
            <person name="Kikuchi H."/>
            <person name="Masuho Y."/>
            <person name="Yamashita R."/>
            <person name="Nakai K."/>
            <person name="Yada T."/>
            <person name="Nakamura Y."/>
            <person name="Ohara O."/>
            <person name="Isogai T."/>
            <person name="Sugano S."/>
        </authorList>
    </citation>
    <scope>NUCLEOTIDE SEQUENCE [LARGE SCALE MRNA] (ISOFORMS 2 AND 3)</scope>
    <source>
        <tissue>Amygdala</tissue>
    </source>
</reference>
<reference key="3">
    <citation type="journal article" date="2006" name="Nature">
        <title>DNA sequence of human chromosome 17 and analysis of rearrangement in the human lineage.</title>
        <authorList>
            <person name="Zody M.C."/>
            <person name="Garber M."/>
            <person name="Adams D.J."/>
            <person name="Sharpe T."/>
            <person name="Harrow J."/>
            <person name="Lupski J.R."/>
            <person name="Nicholson C."/>
            <person name="Searle S.M."/>
            <person name="Wilming L."/>
            <person name="Young S.K."/>
            <person name="Abouelleil A."/>
            <person name="Allen N.R."/>
            <person name="Bi W."/>
            <person name="Bloom T."/>
            <person name="Borowsky M.L."/>
            <person name="Bugalter B.E."/>
            <person name="Butler J."/>
            <person name="Chang J.L."/>
            <person name="Chen C.-K."/>
            <person name="Cook A."/>
            <person name="Corum B."/>
            <person name="Cuomo C.A."/>
            <person name="de Jong P.J."/>
            <person name="DeCaprio D."/>
            <person name="Dewar K."/>
            <person name="FitzGerald M."/>
            <person name="Gilbert J."/>
            <person name="Gibson R."/>
            <person name="Gnerre S."/>
            <person name="Goldstein S."/>
            <person name="Grafham D.V."/>
            <person name="Grocock R."/>
            <person name="Hafez N."/>
            <person name="Hagopian D.S."/>
            <person name="Hart E."/>
            <person name="Norman C.H."/>
            <person name="Humphray S."/>
            <person name="Jaffe D.B."/>
            <person name="Jones M."/>
            <person name="Kamal M."/>
            <person name="Khodiyar V.K."/>
            <person name="LaButti K."/>
            <person name="Laird G."/>
            <person name="Lehoczky J."/>
            <person name="Liu X."/>
            <person name="Lokyitsang T."/>
            <person name="Loveland J."/>
            <person name="Lui A."/>
            <person name="Macdonald P."/>
            <person name="Major J.E."/>
            <person name="Matthews L."/>
            <person name="Mauceli E."/>
            <person name="McCarroll S.A."/>
            <person name="Mihalev A.H."/>
            <person name="Mudge J."/>
            <person name="Nguyen C."/>
            <person name="Nicol R."/>
            <person name="O'Leary S.B."/>
            <person name="Osoegawa K."/>
            <person name="Schwartz D.C."/>
            <person name="Shaw-Smith C."/>
            <person name="Stankiewicz P."/>
            <person name="Steward C."/>
            <person name="Swarbreck D."/>
            <person name="Venkataraman V."/>
            <person name="Whittaker C.A."/>
            <person name="Yang X."/>
            <person name="Zimmer A.R."/>
            <person name="Bradley A."/>
            <person name="Hubbard T."/>
            <person name="Birren B.W."/>
            <person name="Rogers J."/>
            <person name="Lander E.S."/>
            <person name="Nusbaum C."/>
        </authorList>
    </citation>
    <scope>NUCLEOTIDE SEQUENCE [LARGE SCALE GENOMIC DNA]</scope>
</reference>
<reference key="4">
    <citation type="submission" date="2005-09" db="EMBL/GenBank/DDBJ databases">
        <authorList>
            <person name="Mural R.J."/>
            <person name="Istrail S."/>
            <person name="Sutton G.G."/>
            <person name="Florea L."/>
            <person name="Halpern A.L."/>
            <person name="Mobarry C.M."/>
            <person name="Lippert R."/>
            <person name="Walenz B."/>
            <person name="Shatkay H."/>
            <person name="Dew I."/>
            <person name="Miller J.R."/>
            <person name="Flanigan M.J."/>
            <person name="Edwards N.J."/>
            <person name="Bolanos R."/>
            <person name="Fasulo D."/>
            <person name="Halldorsson B.V."/>
            <person name="Hannenhalli S."/>
            <person name="Turner R."/>
            <person name="Yooseph S."/>
            <person name="Lu F."/>
            <person name="Nusskern D.R."/>
            <person name="Shue B.C."/>
            <person name="Zheng X.H."/>
            <person name="Zhong F."/>
            <person name="Delcher A.L."/>
            <person name="Huson D.H."/>
            <person name="Kravitz S.A."/>
            <person name="Mouchard L."/>
            <person name="Reinert K."/>
            <person name="Remington K.A."/>
            <person name="Clark A.G."/>
            <person name="Waterman M.S."/>
            <person name="Eichler E.E."/>
            <person name="Adams M.D."/>
            <person name="Hunkapiller M.W."/>
            <person name="Myers E.W."/>
            <person name="Venter J.C."/>
        </authorList>
    </citation>
    <scope>NUCLEOTIDE SEQUENCE [LARGE SCALE GENOMIC DNA]</scope>
</reference>
<reference key="5">
    <citation type="journal article" date="2004" name="Genome Res.">
        <title>The status, quality, and expansion of the NIH full-length cDNA project: the Mammalian Gene Collection (MGC).</title>
        <authorList>
            <consortium name="The MGC Project Team"/>
        </authorList>
    </citation>
    <scope>NUCLEOTIDE SEQUENCE [LARGE SCALE MRNA] (ISOFORMS 1 AND 4)</scope>
    <source>
        <tissue>Testis</tissue>
    </source>
</reference>
<reference key="6">
    <citation type="journal article" date="2008" name="Proc. Natl. Acad. Sci. U.S.A.">
        <title>A quantitative atlas of mitotic phosphorylation.</title>
        <authorList>
            <person name="Dephoure N."/>
            <person name="Zhou C."/>
            <person name="Villen J."/>
            <person name="Beausoleil S.A."/>
            <person name="Bakalarski C.E."/>
            <person name="Elledge S.J."/>
            <person name="Gygi S.P."/>
        </authorList>
    </citation>
    <scope>PHOSPHORYLATION [LARGE SCALE ANALYSIS] AT SER-1041</scope>
    <scope>IDENTIFICATION BY MASS SPECTROMETRY [LARGE SCALE ANALYSIS]</scope>
    <source>
        <tissue>Cervix carcinoma</tissue>
    </source>
</reference>
<reference key="7">
    <citation type="journal article" date="2013" name="J. Proteome Res.">
        <title>Toward a comprehensive characterization of a human cancer cell phosphoproteome.</title>
        <authorList>
            <person name="Zhou H."/>
            <person name="Di Palma S."/>
            <person name="Preisinger C."/>
            <person name="Peng M."/>
            <person name="Polat A.N."/>
            <person name="Heck A.J."/>
            <person name="Mohammed S."/>
        </authorList>
    </citation>
    <scope>IDENTIFICATION BY MASS SPECTROMETRY [LARGE SCALE ANALYSIS]</scope>
    <source>
        <tissue>Cervix carcinoma</tissue>
    </source>
</reference>
<gene>
    <name type="primary">USP43</name>
</gene>